<evidence type="ECO:0000255" key="1"/>
<evidence type="ECO:0000256" key="2">
    <source>
        <dbReference type="SAM" id="MobiDB-lite"/>
    </source>
</evidence>
<evidence type="ECO:0000305" key="3"/>
<organism>
    <name type="scientific">Dictyostelium discoideum</name>
    <name type="common">Social amoeba</name>
    <dbReference type="NCBI Taxonomy" id="44689"/>
    <lineage>
        <taxon>Eukaryota</taxon>
        <taxon>Amoebozoa</taxon>
        <taxon>Evosea</taxon>
        <taxon>Eumycetozoa</taxon>
        <taxon>Dictyostelia</taxon>
        <taxon>Dictyosteliales</taxon>
        <taxon>Dictyosteliaceae</taxon>
        <taxon>Dictyostelium</taxon>
    </lineage>
</organism>
<proteinExistence type="inferred from homology"/>
<reference key="1">
    <citation type="journal article" date="2005" name="Nature">
        <title>The genome of the social amoeba Dictyostelium discoideum.</title>
        <authorList>
            <person name="Eichinger L."/>
            <person name="Pachebat J.A."/>
            <person name="Gloeckner G."/>
            <person name="Rajandream M.A."/>
            <person name="Sucgang R."/>
            <person name="Berriman M."/>
            <person name="Song J."/>
            <person name="Olsen R."/>
            <person name="Szafranski K."/>
            <person name="Xu Q."/>
            <person name="Tunggal B."/>
            <person name="Kummerfeld S."/>
            <person name="Madera M."/>
            <person name="Konfortov B.A."/>
            <person name="Rivero F."/>
            <person name="Bankier A.T."/>
            <person name="Lehmann R."/>
            <person name="Hamlin N."/>
            <person name="Davies R."/>
            <person name="Gaudet P."/>
            <person name="Fey P."/>
            <person name="Pilcher K."/>
            <person name="Chen G."/>
            <person name="Saunders D."/>
            <person name="Sodergren E.J."/>
            <person name="Davis P."/>
            <person name="Kerhornou A."/>
            <person name="Nie X."/>
            <person name="Hall N."/>
            <person name="Anjard C."/>
            <person name="Hemphill L."/>
            <person name="Bason N."/>
            <person name="Farbrother P."/>
            <person name="Desany B."/>
            <person name="Just E."/>
            <person name="Morio T."/>
            <person name="Rost R."/>
            <person name="Churcher C.M."/>
            <person name="Cooper J."/>
            <person name="Haydock S."/>
            <person name="van Driessche N."/>
            <person name="Cronin A."/>
            <person name="Goodhead I."/>
            <person name="Muzny D.M."/>
            <person name="Mourier T."/>
            <person name="Pain A."/>
            <person name="Lu M."/>
            <person name="Harper D."/>
            <person name="Lindsay R."/>
            <person name="Hauser H."/>
            <person name="James K.D."/>
            <person name="Quiles M."/>
            <person name="Madan Babu M."/>
            <person name="Saito T."/>
            <person name="Buchrieser C."/>
            <person name="Wardroper A."/>
            <person name="Felder M."/>
            <person name="Thangavelu M."/>
            <person name="Johnson D."/>
            <person name="Knights A."/>
            <person name="Loulseged H."/>
            <person name="Mungall K.L."/>
            <person name="Oliver K."/>
            <person name="Price C."/>
            <person name="Quail M.A."/>
            <person name="Urushihara H."/>
            <person name="Hernandez J."/>
            <person name="Rabbinowitsch E."/>
            <person name="Steffen D."/>
            <person name="Sanders M."/>
            <person name="Ma J."/>
            <person name="Kohara Y."/>
            <person name="Sharp S."/>
            <person name="Simmonds M.N."/>
            <person name="Spiegler S."/>
            <person name="Tivey A."/>
            <person name="Sugano S."/>
            <person name="White B."/>
            <person name="Walker D."/>
            <person name="Woodward J.R."/>
            <person name="Winckler T."/>
            <person name="Tanaka Y."/>
            <person name="Shaulsky G."/>
            <person name="Schleicher M."/>
            <person name="Weinstock G.M."/>
            <person name="Rosenthal A."/>
            <person name="Cox E.C."/>
            <person name="Chisholm R.L."/>
            <person name="Gibbs R.A."/>
            <person name="Loomis W.F."/>
            <person name="Platzer M."/>
            <person name="Kay R.R."/>
            <person name="Williams J.G."/>
            <person name="Dear P.H."/>
            <person name="Noegel A.A."/>
            <person name="Barrell B.G."/>
            <person name="Kuspa A."/>
        </authorList>
    </citation>
    <scope>NUCLEOTIDE SEQUENCE [LARGE SCALE GENOMIC DNA]</scope>
    <source>
        <strain>AX4</strain>
    </source>
</reference>
<keyword id="KW-0325">Glycoprotein</keyword>
<keyword id="KW-1185">Reference proteome</keyword>
<keyword id="KW-0964">Secreted</keyword>
<keyword id="KW-0732">Signal</keyword>
<sequence length="176" mass="19806">MIKKISIILITLFIIQLTKSVSVNKNNNNNNNNNNNNNNNNNNNNNNNYFIDHYNYDLDIDLTSQQQQQSSSSSSDAPLEPPSCGELCVCLYTELNYQGLSYEYSIYSGKVDLPPSIRNNITSFVSNADVCFITYDPYVTIQIYTGEFLSNFGIVFGDILQTLAPGLCKDLPPNQF</sequence>
<protein>
    <recommendedName>
        <fullName>Uncharacterized gerABC family protein DDB_G0290879</fullName>
    </recommendedName>
</protein>
<feature type="signal peptide" evidence="1">
    <location>
        <begin position="1"/>
        <end position="20"/>
    </location>
</feature>
<feature type="chain" id="PRO_0000312737" description="Uncharacterized gerABC family protein DDB_G0290879">
    <location>
        <begin position="21"/>
        <end position="176"/>
    </location>
</feature>
<feature type="region of interest" description="Disordered" evidence="2">
    <location>
        <begin position="26"/>
        <end position="46"/>
    </location>
</feature>
<feature type="glycosylation site" description="N-linked (GlcNAc...) asparagine" evidence="1">
    <location>
        <position position="120"/>
    </location>
</feature>
<dbReference type="EMBL" id="AAFI02000171">
    <property type="protein sequence ID" value="EAL62004.1"/>
    <property type="molecule type" value="Genomic_DNA"/>
</dbReference>
<dbReference type="RefSeq" id="XP_635509.1">
    <property type="nucleotide sequence ID" value="XM_630417.1"/>
</dbReference>
<dbReference type="FunCoup" id="Q54FG2">
    <property type="interactions" value="877"/>
</dbReference>
<dbReference type="GlyGen" id="Q54FG2">
    <property type="glycosylation" value="1 site"/>
</dbReference>
<dbReference type="PaxDb" id="44689-DDB0189130"/>
<dbReference type="EnsemblProtists" id="EAL62004">
    <property type="protein sequence ID" value="EAL62004"/>
    <property type="gene ID" value="DDB_G0290879"/>
</dbReference>
<dbReference type="GeneID" id="8627876"/>
<dbReference type="KEGG" id="ddi:DDB_G0290879"/>
<dbReference type="dictyBase" id="DDB_G0290879"/>
<dbReference type="VEuPathDB" id="AmoebaDB:DDB_G0290879"/>
<dbReference type="eggNOG" id="ENOG502RI7S">
    <property type="taxonomic scope" value="Eukaryota"/>
</dbReference>
<dbReference type="HOGENOM" id="CLU_1527952_0_0_1"/>
<dbReference type="InParanoid" id="Q54FG2"/>
<dbReference type="OMA" id="FTEINYK"/>
<dbReference type="PRO" id="PR:Q54FG2"/>
<dbReference type="Proteomes" id="UP000002195">
    <property type="component" value="Chromosome 5"/>
</dbReference>
<dbReference type="GO" id="GO:0005576">
    <property type="term" value="C:extracellular region"/>
    <property type="evidence" value="ECO:0007669"/>
    <property type="project" value="UniProtKB-SubCell"/>
</dbReference>
<name>GERL2_DICDI</name>
<accession>Q54FG2</accession>
<gene>
    <name type="ORF">DDB_G0290879</name>
</gene>
<comment type="subcellular location">
    <subcellularLocation>
        <location evidence="3">Secreted</location>
    </subcellularLocation>
</comment>
<comment type="similarity">
    <text evidence="3">Belongs to the Dictyostelium gerABC family.</text>
</comment>